<organism>
    <name type="scientific">Escherichia coli O1:K1 / APEC</name>
    <dbReference type="NCBI Taxonomy" id="405955"/>
    <lineage>
        <taxon>Bacteria</taxon>
        <taxon>Pseudomonadati</taxon>
        <taxon>Pseudomonadota</taxon>
        <taxon>Gammaproteobacteria</taxon>
        <taxon>Enterobacterales</taxon>
        <taxon>Enterobacteriaceae</taxon>
        <taxon>Escherichia</taxon>
    </lineage>
</organism>
<keyword id="KW-1185">Reference proteome</keyword>
<keyword id="KW-0808">Transferase</keyword>
<keyword id="KW-0819">tRNA processing</keyword>
<evidence type="ECO:0000255" key="1">
    <source>
        <dbReference type="HAMAP-Rule" id="MF_01590"/>
    </source>
</evidence>
<comment type="function">
    <text evidence="1">Catalyzes carboxymethyl transfer from carboxy-S-adenosyl-L-methionine (Cx-SAM) to 5-hydroxyuridine (ho5U) to form 5-carboxymethoxyuridine (cmo5U) at position 34 in tRNAs.</text>
</comment>
<comment type="catalytic activity">
    <reaction evidence="1">
        <text>carboxy-S-adenosyl-L-methionine + 5-hydroxyuridine(34) in tRNA = 5-carboxymethoxyuridine(34) in tRNA + S-adenosyl-L-homocysteine + H(+)</text>
        <dbReference type="Rhea" id="RHEA:52848"/>
        <dbReference type="Rhea" id="RHEA-COMP:13381"/>
        <dbReference type="Rhea" id="RHEA-COMP:13383"/>
        <dbReference type="ChEBI" id="CHEBI:15378"/>
        <dbReference type="ChEBI" id="CHEBI:57856"/>
        <dbReference type="ChEBI" id="CHEBI:134278"/>
        <dbReference type="ChEBI" id="CHEBI:136877"/>
        <dbReference type="ChEBI" id="CHEBI:136879"/>
    </reaction>
</comment>
<comment type="subunit">
    <text evidence="1">Homotetramer.</text>
</comment>
<comment type="similarity">
    <text evidence="1">Belongs to the class I-like SAM-binding methyltransferase superfamily. CmoB family.</text>
</comment>
<reference key="1">
    <citation type="journal article" date="2007" name="J. Bacteriol.">
        <title>The genome sequence of avian pathogenic Escherichia coli strain O1:K1:H7 shares strong similarities with human extraintestinal pathogenic E. coli genomes.</title>
        <authorList>
            <person name="Johnson T.J."/>
            <person name="Kariyawasam S."/>
            <person name="Wannemuehler Y."/>
            <person name="Mangiamele P."/>
            <person name="Johnson S.J."/>
            <person name="Doetkott C."/>
            <person name="Skyberg J.A."/>
            <person name="Lynne A.M."/>
            <person name="Johnson J.R."/>
            <person name="Nolan L.K."/>
        </authorList>
    </citation>
    <scope>NUCLEOTIDE SEQUENCE [LARGE SCALE GENOMIC DNA]</scope>
</reference>
<proteinExistence type="inferred from homology"/>
<sequence length="323" mass="37007">MIDFGNFYSLIAKNHLSHWLETLPAQIANWQREQQHGLFKQWSNAVEFLPEIKPYRLDLLHSVTAESEEPLSAGQIKRIETLMRNLMPWRKGPFSLYGVNIDTEWRSDWKWDRVLPHLSDLTGRTILDVGCGSGYHMWRMIGAGAHLAVGIDPTQLFLCQFEAVRKLLGNDQRAHLLPLGIEQLPALKAFDTVFSMGVLYHRRSPLEHLWQLKDQLVNEGELVLETLVIDGDENTVLVPGDRYAQMRNVYFIPSALALKNWLKKCGFVDIRIADVSVTTTEEQRRTEWMVTESLADFLDPHDPGKTVEGYPAPKRAVLIARKP</sequence>
<dbReference type="EC" id="2.5.1.-" evidence="1"/>
<dbReference type="EMBL" id="CP000468">
    <property type="protein sequence ID" value="ABJ01222.1"/>
    <property type="molecule type" value="Genomic_DNA"/>
</dbReference>
<dbReference type="RefSeq" id="WP_000564725.1">
    <property type="nucleotide sequence ID" value="NZ_CADILS010000028.1"/>
</dbReference>
<dbReference type="SMR" id="A1AC32"/>
<dbReference type="GeneID" id="75171943"/>
<dbReference type="KEGG" id="ecv:APECO1_921"/>
<dbReference type="HOGENOM" id="CLU_052665_0_0_6"/>
<dbReference type="EvolutionaryTrace" id="A1AC32"/>
<dbReference type="Proteomes" id="UP000008216">
    <property type="component" value="Chromosome"/>
</dbReference>
<dbReference type="GO" id="GO:0016765">
    <property type="term" value="F:transferase activity, transferring alkyl or aryl (other than methyl) groups"/>
    <property type="evidence" value="ECO:0007669"/>
    <property type="project" value="UniProtKB-UniRule"/>
</dbReference>
<dbReference type="GO" id="GO:0002098">
    <property type="term" value="P:tRNA wobble uridine modification"/>
    <property type="evidence" value="ECO:0007669"/>
    <property type="project" value="InterPro"/>
</dbReference>
<dbReference type="CDD" id="cd02440">
    <property type="entry name" value="AdoMet_MTases"/>
    <property type="match status" value="1"/>
</dbReference>
<dbReference type="FunFam" id="3.40.50.150:FF:000080">
    <property type="entry name" value="tRNA U34 carboxymethyltransferase"/>
    <property type="match status" value="1"/>
</dbReference>
<dbReference type="Gene3D" id="3.40.50.150">
    <property type="entry name" value="Vaccinia Virus protein VP39"/>
    <property type="match status" value="1"/>
</dbReference>
<dbReference type="HAMAP" id="MF_01590">
    <property type="entry name" value="tRNA_carboxymethyltr_CmoB"/>
    <property type="match status" value="1"/>
</dbReference>
<dbReference type="InterPro" id="IPR010017">
    <property type="entry name" value="CmoB"/>
</dbReference>
<dbReference type="InterPro" id="IPR027555">
    <property type="entry name" value="Mo5U34_MeTrfas-like"/>
</dbReference>
<dbReference type="InterPro" id="IPR029063">
    <property type="entry name" value="SAM-dependent_MTases_sf"/>
</dbReference>
<dbReference type="NCBIfam" id="NF011650">
    <property type="entry name" value="PRK15068.1"/>
    <property type="match status" value="1"/>
</dbReference>
<dbReference type="NCBIfam" id="TIGR00452">
    <property type="entry name" value="tRNA 5-methoxyuridine(34)/uridine 5-oxyacetic acid(34) synthase CmoB"/>
    <property type="match status" value="1"/>
</dbReference>
<dbReference type="PANTHER" id="PTHR43861">
    <property type="entry name" value="TRANS-ACONITATE 2-METHYLTRANSFERASE-RELATED"/>
    <property type="match status" value="1"/>
</dbReference>
<dbReference type="Pfam" id="PF08003">
    <property type="entry name" value="Methyltransf_9"/>
    <property type="match status" value="1"/>
</dbReference>
<dbReference type="SUPFAM" id="SSF53335">
    <property type="entry name" value="S-adenosyl-L-methionine-dependent methyltransferases"/>
    <property type="match status" value="1"/>
</dbReference>
<name>CMOB_ECOK1</name>
<gene>
    <name evidence="1" type="primary">cmoB</name>
    <name type="ordered locus">Ecok1_17280</name>
    <name type="ORF">APECO1_921</name>
</gene>
<accession>A1AC32</accession>
<feature type="chain" id="PRO_0000313917" description="tRNA U34 carboxymethyltransferase">
    <location>
        <begin position="1"/>
        <end position="323"/>
    </location>
</feature>
<feature type="binding site" evidence="1">
    <location>
        <position position="91"/>
    </location>
    <ligand>
        <name>carboxy-S-adenosyl-L-methionine</name>
        <dbReference type="ChEBI" id="CHEBI:134278"/>
    </ligand>
</feature>
<feature type="binding site" evidence="1">
    <location>
        <position position="105"/>
    </location>
    <ligand>
        <name>carboxy-S-adenosyl-L-methionine</name>
        <dbReference type="ChEBI" id="CHEBI:134278"/>
    </ligand>
</feature>
<feature type="binding site" evidence="1">
    <location>
        <position position="110"/>
    </location>
    <ligand>
        <name>carboxy-S-adenosyl-L-methionine</name>
        <dbReference type="ChEBI" id="CHEBI:134278"/>
    </ligand>
</feature>
<feature type="binding site" evidence="1">
    <location>
        <position position="130"/>
    </location>
    <ligand>
        <name>carboxy-S-adenosyl-L-methionine</name>
        <dbReference type="ChEBI" id="CHEBI:134278"/>
    </ligand>
</feature>
<feature type="binding site" evidence="1">
    <location>
        <begin position="152"/>
        <end position="154"/>
    </location>
    <ligand>
        <name>carboxy-S-adenosyl-L-methionine</name>
        <dbReference type="ChEBI" id="CHEBI:134278"/>
    </ligand>
</feature>
<feature type="binding site" evidence="1">
    <location>
        <begin position="181"/>
        <end position="182"/>
    </location>
    <ligand>
        <name>carboxy-S-adenosyl-L-methionine</name>
        <dbReference type="ChEBI" id="CHEBI:134278"/>
    </ligand>
</feature>
<feature type="binding site" evidence="1">
    <location>
        <position position="196"/>
    </location>
    <ligand>
        <name>carboxy-S-adenosyl-L-methionine</name>
        <dbReference type="ChEBI" id="CHEBI:134278"/>
    </ligand>
</feature>
<feature type="binding site" evidence="1">
    <location>
        <position position="200"/>
    </location>
    <ligand>
        <name>carboxy-S-adenosyl-L-methionine</name>
        <dbReference type="ChEBI" id="CHEBI:134278"/>
    </ligand>
</feature>
<feature type="binding site" evidence="1">
    <location>
        <position position="315"/>
    </location>
    <ligand>
        <name>carboxy-S-adenosyl-L-methionine</name>
        <dbReference type="ChEBI" id="CHEBI:134278"/>
    </ligand>
</feature>
<protein>
    <recommendedName>
        <fullName evidence="1">tRNA U34 carboxymethyltransferase</fullName>
        <ecNumber evidence="1">2.5.1.-</ecNumber>
    </recommendedName>
</protein>